<accession>A5CCQ4</accession>
<evidence type="ECO:0000255" key="1">
    <source>
        <dbReference type="HAMAP-Rule" id="MF_00251"/>
    </source>
</evidence>
<evidence type="ECO:0000305" key="2"/>
<organism>
    <name type="scientific">Orientia tsutsugamushi (strain Boryong)</name>
    <name type="common">Rickettsia tsutsugamushi</name>
    <dbReference type="NCBI Taxonomy" id="357244"/>
    <lineage>
        <taxon>Bacteria</taxon>
        <taxon>Pseudomonadati</taxon>
        <taxon>Pseudomonadota</taxon>
        <taxon>Alphaproteobacteria</taxon>
        <taxon>Rickettsiales</taxon>
        <taxon>Rickettsiaceae</taxon>
        <taxon>Rickettsieae</taxon>
        <taxon>Orientia</taxon>
    </lineage>
</organism>
<sequence length="41" mass="4777">MKVVSSLKSLKNRDKSCQVVKRRGKIFVINKKNKKFKARQG</sequence>
<proteinExistence type="inferred from homology"/>
<comment type="similarity">
    <text evidence="1">Belongs to the bacterial ribosomal protein bL36 family.</text>
</comment>
<protein>
    <recommendedName>
        <fullName evidence="1">Large ribosomal subunit protein bL36</fullName>
    </recommendedName>
    <alternativeName>
        <fullName evidence="2">50S ribosomal protein L36</fullName>
    </alternativeName>
</protein>
<feature type="chain" id="PRO_0000302259" description="Large ribosomal subunit protein bL36">
    <location>
        <begin position="1"/>
        <end position="41"/>
    </location>
</feature>
<gene>
    <name evidence="1" type="primary">rpmJ</name>
    <name type="ordered locus">OTBS_0427</name>
</gene>
<reference key="1">
    <citation type="journal article" date="2007" name="Proc. Natl. Acad. Sci. U.S.A.">
        <title>The Orientia tsutsugamushi genome reveals massive proliferation of conjugative type IV secretion system and host-cell interaction genes.</title>
        <authorList>
            <person name="Cho N.-H."/>
            <person name="Kim H.-R."/>
            <person name="Lee J.-H."/>
            <person name="Kim S.-Y."/>
            <person name="Kim J."/>
            <person name="Cha S."/>
            <person name="Kim S.-Y."/>
            <person name="Darby A.C."/>
            <person name="Fuxelius H.-H."/>
            <person name="Yin J."/>
            <person name="Kim J.H."/>
            <person name="Kim J."/>
            <person name="Lee S.J."/>
            <person name="Koh Y.-S."/>
            <person name="Jang W.-J."/>
            <person name="Park K.-H."/>
            <person name="Andersson S.G.E."/>
            <person name="Choi M.-S."/>
            <person name="Kim I.-S."/>
        </authorList>
    </citation>
    <scope>NUCLEOTIDE SEQUENCE [LARGE SCALE GENOMIC DNA]</scope>
    <source>
        <strain>Boryong</strain>
    </source>
</reference>
<dbReference type="EMBL" id="AM494475">
    <property type="protein sequence ID" value="CAM79493.1"/>
    <property type="molecule type" value="Genomic_DNA"/>
</dbReference>
<dbReference type="SMR" id="A5CCQ4"/>
<dbReference type="KEGG" id="ots:OTBS_0427"/>
<dbReference type="eggNOG" id="COG0257">
    <property type="taxonomic scope" value="Bacteria"/>
</dbReference>
<dbReference type="HOGENOM" id="CLU_135723_3_2_5"/>
<dbReference type="Proteomes" id="UP000001565">
    <property type="component" value="Chromosome"/>
</dbReference>
<dbReference type="GO" id="GO:1990904">
    <property type="term" value="C:ribonucleoprotein complex"/>
    <property type="evidence" value="ECO:0007669"/>
    <property type="project" value="UniProtKB-KW"/>
</dbReference>
<dbReference type="GO" id="GO:0005840">
    <property type="term" value="C:ribosome"/>
    <property type="evidence" value="ECO:0007669"/>
    <property type="project" value="UniProtKB-KW"/>
</dbReference>
<dbReference type="GO" id="GO:0003735">
    <property type="term" value="F:structural constituent of ribosome"/>
    <property type="evidence" value="ECO:0007669"/>
    <property type="project" value="InterPro"/>
</dbReference>
<dbReference type="GO" id="GO:0006412">
    <property type="term" value="P:translation"/>
    <property type="evidence" value="ECO:0007669"/>
    <property type="project" value="UniProtKB-UniRule"/>
</dbReference>
<dbReference type="HAMAP" id="MF_00251">
    <property type="entry name" value="Ribosomal_bL36"/>
    <property type="match status" value="1"/>
</dbReference>
<dbReference type="InterPro" id="IPR000473">
    <property type="entry name" value="Ribosomal_bL36"/>
</dbReference>
<dbReference type="InterPro" id="IPR035977">
    <property type="entry name" value="Ribosomal_bL36_sp"/>
</dbReference>
<dbReference type="InterPro" id="IPR047621">
    <property type="entry name" value="Ribosomal_L36_bact"/>
</dbReference>
<dbReference type="NCBIfam" id="NF002021">
    <property type="entry name" value="PRK00831.1"/>
    <property type="match status" value="1"/>
</dbReference>
<dbReference type="PANTHER" id="PTHR47781">
    <property type="entry name" value="50S RIBOSOMAL PROTEIN L36 2"/>
    <property type="match status" value="1"/>
</dbReference>
<dbReference type="PANTHER" id="PTHR47781:SF1">
    <property type="entry name" value="LARGE RIBOSOMAL SUBUNIT PROTEIN BL36B"/>
    <property type="match status" value="1"/>
</dbReference>
<dbReference type="Pfam" id="PF00444">
    <property type="entry name" value="Ribosomal_L36"/>
    <property type="match status" value="1"/>
</dbReference>
<dbReference type="SUPFAM" id="SSF57840">
    <property type="entry name" value="Ribosomal protein L36"/>
    <property type="match status" value="1"/>
</dbReference>
<dbReference type="PROSITE" id="PS00828">
    <property type="entry name" value="RIBOSOMAL_L36"/>
    <property type="match status" value="1"/>
</dbReference>
<keyword id="KW-1185">Reference proteome</keyword>
<keyword id="KW-0687">Ribonucleoprotein</keyword>
<keyword id="KW-0689">Ribosomal protein</keyword>
<name>RL36_ORITB</name>